<sequence>MENTASAAPPSSEDLVVDTKENAEPPFCGISLSGSSQAPFHPQSPTLQQDERDELILQQSGEQQLGNSGELRQEEELPKTRRGGWTKGRKRKRSPRDNNAPKAPLTGYVRFMNERREQLRTERPDVPFPEITRIVGSEWSKLPAHEKQHYLDEAEKDKERYTKELQQYQNTDAYQTYSRKAQSRQKGRQQRQEGVRGVPINTEKESILKERPIFDIPIFTEEFLNHSKAREAELRQLRKSNMEFEERNAALQKHVESMRSAVQRLEAELNQEQERNSLLQQHLQSVRQALTHCLQSVPIPGTTEIPTLETIDLYMSRLQNAVLTHPKESEVIISGVREVLSQLEG</sequence>
<protein>
    <recommendedName>
        <fullName>High mobility group protein 20A</fullName>
    </recommendedName>
    <alternativeName>
        <fullName>HMG box-containing protein 20A</fullName>
    </alternativeName>
</protein>
<proteinExistence type="evidence at transcript level"/>
<accession>Q6DIJ5</accession>
<reference key="1">
    <citation type="submission" date="2004-06" db="EMBL/GenBank/DDBJ databases">
        <authorList>
            <consortium name="NIH - Xenopus Gene Collection (XGC) project"/>
        </authorList>
    </citation>
    <scope>NUCLEOTIDE SEQUENCE [LARGE SCALE MRNA]</scope>
    <source>
        <tissue>Embryo</tissue>
    </source>
</reference>
<keyword id="KW-0175">Coiled coil</keyword>
<keyword id="KW-0238">DNA-binding</keyword>
<keyword id="KW-0539">Nucleus</keyword>
<keyword id="KW-1185">Reference proteome</keyword>
<keyword id="KW-0804">Transcription</keyword>
<keyword id="KW-0805">Transcription regulation</keyword>
<gene>
    <name type="primary">hmg20a</name>
</gene>
<organism>
    <name type="scientific">Xenopus tropicalis</name>
    <name type="common">Western clawed frog</name>
    <name type="synonym">Silurana tropicalis</name>
    <dbReference type="NCBI Taxonomy" id="8364"/>
    <lineage>
        <taxon>Eukaryota</taxon>
        <taxon>Metazoa</taxon>
        <taxon>Chordata</taxon>
        <taxon>Craniata</taxon>
        <taxon>Vertebrata</taxon>
        <taxon>Euteleostomi</taxon>
        <taxon>Amphibia</taxon>
        <taxon>Batrachia</taxon>
        <taxon>Anura</taxon>
        <taxon>Pipoidea</taxon>
        <taxon>Pipidae</taxon>
        <taxon>Xenopodinae</taxon>
        <taxon>Xenopus</taxon>
        <taxon>Silurana</taxon>
    </lineage>
</organism>
<evidence type="ECO:0000255" key="1"/>
<evidence type="ECO:0000255" key="2">
    <source>
        <dbReference type="PROSITE-ProRule" id="PRU00267"/>
    </source>
</evidence>
<evidence type="ECO:0000256" key="3">
    <source>
        <dbReference type="SAM" id="MobiDB-lite"/>
    </source>
</evidence>
<comment type="function">
    <text>Plays a role in neuronal differentiation.</text>
</comment>
<comment type="subcellular location">
    <subcellularLocation>
        <location evidence="2">Nucleus</location>
    </subcellularLocation>
</comment>
<feature type="chain" id="PRO_0000238653" description="High mobility group protein 20A">
    <location>
        <begin position="1"/>
        <end position="345"/>
    </location>
</feature>
<feature type="DNA-binding region" description="HMG box" evidence="2">
    <location>
        <begin position="101"/>
        <end position="169"/>
    </location>
</feature>
<feature type="region of interest" description="Disordered" evidence="3">
    <location>
        <begin position="1"/>
        <end position="124"/>
    </location>
</feature>
<feature type="region of interest" description="Disordered" evidence="3">
    <location>
        <begin position="167"/>
        <end position="198"/>
    </location>
</feature>
<feature type="coiled-coil region" evidence="1">
    <location>
        <begin position="227"/>
        <end position="290"/>
    </location>
</feature>
<feature type="compositionally biased region" description="Polar residues" evidence="3">
    <location>
        <begin position="32"/>
        <end position="48"/>
    </location>
</feature>
<feature type="compositionally biased region" description="Polar residues" evidence="3">
    <location>
        <begin position="57"/>
        <end position="67"/>
    </location>
</feature>
<feature type="compositionally biased region" description="Basic residues" evidence="3">
    <location>
        <begin position="80"/>
        <end position="94"/>
    </location>
</feature>
<feature type="compositionally biased region" description="Basic and acidic residues" evidence="3">
    <location>
        <begin position="112"/>
        <end position="124"/>
    </location>
</feature>
<feature type="compositionally biased region" description="Polar residues" evidence="3">
    <location>
        <begin position="167"/>
        <end position="180"/>
    </location>
</feature>
<dbReference type="EMBL" id="BC075543">
    <property type="protein sequence ID" value="AAH75543.1"/>
    <property type="molecule type" value="mRNA"/>
</dbReference>
<dbReference type="RefSeq" id="NP_001006760.1">
    <property type="nucleotide sequence ID" value="NM_001006759.1"/>
</dbReference>
<dbReference type="RefSeq" id="XP_012821857.1">
    <property type="nucleotide sequence ID" value="XM_012966403.3"/>
</dbReference>
<dbReference type="RefSeq" id="XP_012821859.1">
    <property type="nucleotide sequence ID" value="XM_012966405.3"/>
</dbReference>
<dbReference type="RefSeq" id="XP_012821860.1">
    <property type="nucleotide sequence ID" value="XM_012966406.3"/>
</dbReference>
<dbReference type="RefSeq" id="XP_012821861.1">
    <property type="nucleotide sequence ID" value="XM_012966407.3"/>
</dbReference>
<dbReference type="SMR" id="Q6DIJ5"/>
<dbReference type="FunCoup" id="Q6DIJ5">
    <property type="interactions" value="2696"/>
</dbReference>
<dbReference type="STRING" id="8364.ENSXETP00000012795"/>
<dbReference type="PaxDb" id="8364-ENSXETP00000033399"/>
<dbReference type="DNASU" id="448440"/>
<dbReference type="GeneID" id="448440"/>
<dbReference type="KEGG" id="xtr:448440"/>
<dbReference type="AGR" id="Xenbase:XB-GENE-955353"/>
<dbReference type="CTD" id="10363"/>
<dbReference type="Xenbase" id="XB-GENE-955353">
    <property type="gene designation" value="hmg20a"/>
</dbReference>
<dbReference type="eggNOG" id="KOG0381">
    <property type="taxonomic scope" value="Eukaryota"/>
</dbReference>
<dbReference type="HOGENOM" id="CLU_060006_0_0_1"/>
<dbReference type="InParanoid" id="Q6DIJ5"/>
<dbReference type="OMA" id="QPAYNGE"/>
<dbReference type="OrthoDB" id="3213154at2759"/>
<dbReference type="PhylomeDB" id="Q6DIJ5"/>
<dbReference type="TreeFam" id="TF106440"/>
<dbReference type="Proteomes" id="UP000008143">
    <property type="component" value="Chromosome 3"/>
</dbReference>
<dbReference type="Bgee" id="ENSXETG00000015269">
    <property type="expression patterns" value="Expressed in testis and 13 other cell types or tissues"/>
</dbReference>
<dbReference type="ExpressionAtlas" id="Q6DIJ5">
    <property type="expression patterns" value="differential"/>
</dbReference>
<dbReference type="GO" id="GO:0005634">
    <property type="term" value="C:nucleus"/>
    <property type="evidence" value="ECO:0007669"/>
    <property type="project" value="UniProtKB-SubCell"/>
</dbReference>
<dbReference type="GO" id="GO:0003677">
    <property type="term" value="F:DNA binding"/>
    <property type="evidence" value="ECO:0007669"/>
    <property type="project" value="UniProtKB-KW"/>
</dbReference>
<dbReference type="CDD" id="cd22017">
    <property type="entry name" value="HMG-box_HMG20A"/>
    <property type="match status" value="1"/>
</dbReference>
<dbReference type="Gene3D" id="1.10.30.10">
    <property type="entry name" value="High mobility group box domain"/>
    <property type="match status" value="1"/>
</dbReference>
<dbReference type="InterPro" id="IPR051965">
    <property type="entry name" value="ChromReg_NeuronalGeneExpr"/>
</dbReference>
<dbReference type="InterPro" id="IPR009071">
    <property type="entry name" value="HMG_box_dom"/>
</dbReference>
<dbReference type="InterPro" id="IPR036910">
    <property type="entry name" value="HMG_box_dom_sf"/>
</dbReference>
<dbReference type="PANTHER" id="PTHR46040">
    <property type="entry name" value="HIGH MOBILITY GROUP PROTEIN 2"/>
    <property type="match status" value="1"/>
</dbReference>
<dbReference type="PANTHER" id="PTHR46040:SF1">
    <property type="entry name" value="HIGH MOBILITY GROUP PROTEIN 20A-RELATED"/>
    <property type="match status" value="1"/>
</dbReference>
<dbReference type="Pfam" id="PF00505">
    <property type="entry name" value="HMG_box"/>
    <property type="match status" value="1"/>
</dbReference>
<dbReference type="SMART" id="SM00398">
    <property type="entry name" value="HMG"/>
    <property type="match status" value="1"/>
</dbReference>
<dbReference type="SUPFAM" id="SSF47095">
    <property type="entry name" value="HMG-box"/>
    <property type="match status" value="1"/>
</dbReference>
<dbReference type="PROSITE" id="PS50118">
    <property type="entry name" value="HMG_BOX_2"/>
    <property type="match status" value="1"/>
</dbReference>
<name>HM20A_XENTR</name>